<reference key="1">
    <citation type="journal article" date="2011" name="J. Bacteriol.">
        <title>Complete genome sequence of the metabolically versatile plant growth-promoting endophyte, Variovorax paradoxus S110.</title>
        <authorList>
            <person name="Han J.I."/>
            <person name="Choi H.K."/>
            <person name="Lee S.W."/>
            <person name="Orwin P.M."/>
            <person name="Kim J."/>
            <person name="Laroe S.L."/>
            <person name="Kim T.G."/>
            <person name="O'Neil J."/>
            <person name="Leadbetter J.R."/>
            <person name="Lee S.Y."/>
            <person name="Hur C.G."/>
            <person name="Spain J.C."/>
            <person name="Ovchinnikova G."/>
            <person name="Goodwin L."/>
            <person name="Han C."/>
        </authorList>
    </citation>
    <scope>NUCLEOTIDE SEQUENCE [LARGE SCALE GENOMIC DNA]</scope>
    <source>
        <strain>S110</strain>
    </source>
</reference>
<dbReference type="EMBL" id="CP001635">
    <property type="protein sequence ID" value="ACS19602.1"/>
    <property type="molecule type" value="Genomic_DNA"/>
</dbReference>
<dbReference type="SMR" id="C5CNX5"/>
<dbReference type="STRING" id="543728.Vapar_2982"/>
<dbReference type="KEGG" id="vap:Vapar_2982"/>
<dbReference type="eggNOG" id="COG2924">
    <property type="taxonomic scope" value="Bacteria"/>
</dbReference>
<dbReference type="HOGENOM" id="CLU_170994_0_0_4"/>
<dbReference type="OrthoDB" id="9804318at2"/>
<dbReference type="GO" id="GO:0005829">
    <property type="term" value="C:cytosol"/>
    <property type="evidence" value="ECO:0007669"/>
    <property type="project" value="TreeGrafter"/>
</dbReference>
<dbReference type="GO" id="GO:0005506">
    <property type="term" value="F:iron ion binding"/>
    <property type="evidence" value="ECO:0007669"/>
    <property type="project" value="UniProtKB-UniRule"/>
</dbReference>
<dbReference type="GO" id="GO:0034599">
    <property type="term" value="P:cellular response to oxidative stress"/>
    <property type="evidence" value="ECO:0007669"/>
    <property type="project" value="TreeGrafter"/>
</dbReference>
<dbReference type="FunFam" id="1.10.3880.10:FF:000001">
    <property type="entry name" value="Probable Fe(2+)-trafficking protein"/>
    <property type="match status" value="1"/>
</dbReference>
<dbReference type="Gene3D" id="1.10.3880.10">
    <property type="entry name" value="Fe(II) trafficking protein YggX"/>
    <property type="match status" value="1"/>
</dbReference>
<dbReference type="HAMAP" id="MF_00686">
    <property type="entry name" value="Fe_traffic_YggX"/>
    <property type="match status" value="1"/>
</dbReference>
<dbReference type="InterPro" id="IPR007457">
    <property type="entry name" value="Fe_traffick_prot_YggX"/>
</dbReference>
<dbReference type="InterPro" id="IPR036766">
    <property type="entry name" value="Fe_traffick_prot_YggX_sf"/>
</dbReference>
<dbReference type="NCBIfam" id="NF003817">
    <property type="entry name" value="PRK05408.1"/>
    <property type="match status" value="1"/>
</dbReference>
<dbReference type="PANTHER" id="PTHR36965">
    <property type="entry name" value="FE(2+)-TRAFFICKING PROTEIN-RELATED"/>
    <property type="match status" value="1"/>
</dbReference>
<dbReference type="PANTHER" id="PTHR36965:SF1">
    <property type="entry name" value="FE(2+)-TRAFFICKING PROTEIN-RELATED"/>
    <property type="match status" value="1"/>
</dbReference>
<dbReference type="Pfam" id="PF04362">
    <property type="entry name" value="Iron_traffic"/>
    <property type="match status" value="1"/>
</dbReference>
<dbReference type="PIRSF" id="PIRSF029827">
    <property type="entry name" value="Fe_traffic_YggX"/>
    <property type="match status" value="1"/>
</dbReference>
<dbReference type="SUPFAM" id="SSF111148">
    <property type="entry name" value="YggX-like"/>
    <property type="match status" value="1"/>
</dbReference>
<protein>
    <recommendedName>
        <fullName evidence="1">Probable Fe(2+)-trafficking protein</fullName>
    </recommendedName>
</protein>
<accession>C5CNX5</accession>
<organism>
    <name type="scientific">Variovorax paradoxus (strain S110)</name>
    <dbReference type="NCBI Taxonomy" id="543728"/>
    <lineage>
        <taxon>Bacteria</taxon>
        <taxon>Pseudomonadati</taxon>
        <taxon>Pseudomonadota</taxon>
        <taxon>Betaproteobacteria</taxon>
        <taxon>Burkholderiales</taxon>
        <taxon>Comamonadaceae</taxon>
        <taxon>Variovorax</taxon>
    </lineage>
</organism>
<evidence type="ECO:0000255" key="1">
    <source>
        <dbReference type="HAMAP-Rule" id="MF_00686"/>
    </source>
</evidence>
<gene>
    <name type="ordered locus">Vapar_2982</name>
</gene>
<keyword id="KW-0408">Iron</keyword>
<feature type="chain" id="PRO_1000212559" description="Probable Fe(2+)-trafficking protein">
    <location>
        <begin position="1"/>
        <end position="90"/>
    </location>
</feature>
<sequence length="90" mass="10308">MARMVQCIKLGKEAEGLDFPPYPGELGKRLWENVSKEAWAAWLKQQTMLVNENRLNLADLRARQYLARQMEKHFFGEGADVAQGYVPPSN</sequence>
<name>FETP_VARPS</name>
<comment type="function">
    <text evidence="1">Could be a mediator in iron transactions between iron acquisition and iron-requiring processes, such as synthesis and/or repair of Fe-S clusters in biosynthetic enzymes.</text>
</comment>
<comment type="similarity">
    <text evidence="1">Belongs to the Fe(2+)-trafficking protein family.</text>
</comment>
<proteinExistence type="inferred from homology"/>